<organism>
    <name type="scientific">Streptococcus pneumoniae serotype 19F (strain G54)</name>
    <dbReference type="NCBI Taxonomy" id="512566"/>
    <lineage>
        <taxon>Bacteria</taxon>
        <taxon>Bacillati</taxon>
        <taxon>Bacillota</taxon>
        <taxon>Bacilli</taxon>
        <taxon>Lactobacillales</taxon>
        <taxon>Streptococcaceae</taxon>
        <taxon>Streptococcus</taxon>
    </lineage>
</organism>
<accession>B5E6G8</accession>
<comment type="function">
    <text evidence="1">Binds 16S rRNA, required for the assembly of 30S particles and may also be responsible for determining the conformation of the 16S rRNA at the A site.</text>
</comment>
<comment type="subunit">
    <text evidence="1">Part of the 30S ribosomal subunit. Contacts proteins S3 and S10.</text>
</comment>
<comment type="similarity">
    <text evidence="1">Belongs to the universal ribosomal protein uS14 family.</text>
</comment>
<reference key="1">
    <citation type="journal article" date="2001" name="Microb. Drug Resist.">
        <title>Annotated draft genomic sequence from a Streptococcus pneumoniae type 19F clinical isolate.</title>
        <authorList>
            <person name="Dopazo J."/>
            <person name="Mendoza A."/>
            <person name="Herrero J."/>
            <person name="Caldara F."/>
            <person name="Humbert Y."/>
            <person name="Friedli L."/>
            <person name="Guerrier M."/>
            <person name="Grand-Schenk E."/>
            <person name="Gandin C."/>
            <person name="de Francesco M."/>
            <person name="Polissi A."/>
            <person name="Buell G."/>
            <person name="Feger G."/>
            <person name="Garcia E."/>
            <person name="Peitsch M."/>
            <person name="Garcia-Bustos J.F."/>
        </authorList>
    </citation>
    <scope>NUCLEOTIDE SEQUENCE [LARGE SCALE GENOMIC DNA]</scope>
    <source>
        <strain>G54</strain>
    </source>
</reference>
<reference key="2">
    <citation type="submission" date="2008-03" db="EMBL/GenBank/DDBJ databases">
        <title>Pneumococcal beta glucoside metabolism investigated by whole genome comparison.</title>
        <authorList>
            <person name="Mulas L."/>
            <person name="Trappetti C."/>
            <person name="Hakenbeck R."/>
            <person name="Iannelli F."/>
            <person name="Pozzi G."/>
            <person name="Davidsen T.M."/>
            <person name="Tettelin H."/>
            <person name="Oggioni M."/>
        </authorList>
    </citation>
    <scope>NUCLEOTIDE SEQUENCE [LARGE SCALE GENOMIC DNA]</scope>
    <source>
        <strain>G54</strain>
    </source>
</reference>
<evidence type="ECO:0000255" key="1">
    <source>
        <dbReference type="HAMAP-Rule" id="MF_00537"/>
    </source>
</evidence>
<evidence type="ECO:0000305" key="2"/>
<gene>
    <name evidence="1" type="primary">rpsN</name>
    <name type="ordered locus">SPG_0208</name>
</gene>
<protein>
    <recommendedName>
        <fullName evidence="1">Small ribosomal subunit protein uS14</fullName>
    </recommendedName>
    <alternativeName>
        <fullName evidence="2">30S ribosomal protein S14</fullName>
    </alternativeName>
</protein>
<name>RS14_STRP4</name>
<sequence length="89" mass="10076">MAKKSMVAREAKRQKIVDRYAEKRAALKAAGDYEGLSKLPRNASPTRLHNRCRVTGRPHSVYRKFGLSRIAFRELAHKGQIPGVTKASW</sequence>
<feature type="chain" id="PRO_1000128606" description="Small ribosomal subunit protein uS14">
    <location>
        <begin position="1"/>
        <end position="89"/>
    </location>
</feature>
<dbReference type="EMBL" id="CP001015">
    <property type="protein sequence ID" value="ACF55899.1"/>
    <property type="molecule type" value="Genomic_DNA"/>
</dbReference>
<dbReference type="SMR" id="B5E6G8"/>
<dbReference type="KEGG" id="spx:SPG_0208"/>
<dbReference type="HOGENOM" id="CLU_139869_0_0_9"/>
<dbReference type="GO" id="GO:0005737">
    <property type="term" value="C:cytoplasm"/>
    <property type="evidence" value="ECO:0007669"/>
    <property type="project" value="UniProtKB-ARBA"/>
</dbReference>
<dbReference type="GO" id="GO:0015935">
    <property type="term" value="C:small ribosomal subunit"/>
    <property type="evidence" value="ECO:0007669"/>
    <property type="project" value="TreeGrafter"/>
</dbReference>
<dbReference type="GO" id="GO:0019843">
    <property type="term" value="F:rRNA binding"/>
    <property type="evidence" value="ECO:0007669"/>
    <property type="project" value="UniProtKB-UniRule"/>
</dbReference>
<dbReference type="GO" id="GO:0003735">
    <property type="term" value="F:structural constituent of ribosome"/>
    <property type="evidence" value="ECO:0007669"/>
    <property type="project" value="InterPro"/>
</dbReference>
<dbReference type="GO" id="GO:0006412">
    <property type="term" value="P:translation"/>
    <property type="evidence" value="ECO:0007669"/>
    <property type="project" value="UniProtKB-UniRule"/>
</dbReference>
<dbReference type="FunFam" id="4.10.830.10:FF:000003">
    <property type="entry name" value="30S ribosomal protein S14"/>
    <property type="match status" value="1"/>
</dbReference>
<dbReference type="Gene3D" id="4.10.830.10">
    <property type="entry name" value="30s Ribosomal Protein S14, Chain N"/>
    <property type="match status" value="1"/>
</dbReference>
<dbReference type="HAMAP" id="MF_00537">
    <property type="entry name" value="Ribosomal_uS14_1"/>
    <property type="match status" value="1"/>
</dbReference>
<dbReference type="InterPro" id="IPR001209">
    <property type="entry name" value="Ribosomal_uS14"/>
</dbReference>
<dbReference type="InterPro" id="IPR023036">
    <property type="entry name" value="Ribosomal_uS14_bac/plastid"/>
</dbReference>
<dbReference type="InterPro" id="IPR018271">
    <property type="entry name" value="Ribosomal_uS14_CS"/>
</dbReference>
<dbReference type="InterPro" id="IPR043140">
    <property type="entry name" value="Ribosomal_uS14_sf"/>
</dbReference>
<dbReference type="NCBIfam" id="NF006477">
    <property type="entry name" value="PRK08881.1"/>
    <property type="match status" value="1"/>
</dbReference>
<dbReference type="PANTHER" id="PTHR19836">
    <property type="entry name" value="30S RIBOSOMAL PROTEIN S14"/>
    <property type="match status" value="1"/>
</dbReference>
<dbReference type="PANTHER" id="PTHR19836:SF19">
    <property type="entry name" value="SMALL RIBOSOMAL SUBUNIT PROTEIN US14M"/>
    <property type="match status" value="1"/>
</dbReference>
<dbReference type="Pfam" id="PF00253">
    <property type="entry name" value="Ribosomal_S14"/>
    <property type="match status" value="1"/>
</dbReference>
<dbReference type="SUPFAM" id="SSF57716">
    <property type="entry name" value="Glucocorticoid receptor-like (DNA-binding domain)"/>
    <property type="match status" value="1"/>
</dbReference>
<dbReference type="PROSITE" id="PS00527">
    <property type="entry name" value="RIBOSOMAL_S14"/>
    <property type="match status" value="1"/>
</dbReference>
<proteinExistence type="inferred from homology"/>
<keyword id="KW-0687">Ribonucleoprotein</keyword>
<keyword id="KW-0689">Ribosomal protein</keyword>
<keyword id="KW-0694">RNA-binding</keyword>
<keyword id="KW-0699">rRNA-binding</keyword>